<organism>
    <name type="scientific">Bacteroides thetaiotaomicron (strain ATCC 29148 / DSM 2079 / JCM 5827 / CCUG 10774 / NCTC 10582 / VPI-5482 / E50)</name>
    <dbReference type="NCBI Taxonomy" id="226186"/>
    <lineage>
        <taxon>Bacteria</taxon>
        <taxon>Pseudomonadati</taxon>
        <taxon>Bacteroidota</taxon>
        <taxon>Bacteroidia</taxon>
        <taxon>Bacteroidales</taxon>
        <taxon>Bacteroidaceae</taxon>
        <taxon>Bacteroides</taxon>
    </lineage>
</organism>
<keyword id="KW-0004">4Fe-4S</keyword>
<keyword id="KW-0408">Iron</keyword>
<keyword id="KW-0411">Iron-sulfur</keyword>
<keyword id="KW-0414">Isoprene biosynthesis</keyword>
<keyword id="KW-0479">Metal-binding</keyword>
<keyword id="KW-0560">Oxidoreductase</keyword>
<keyword id="KW-1185">Reference proteome</keyword>
<comment type="function">
    <text evidence="1">Catalyzes the conversion of 1-hydroxy-2-methyl-2-(E)-butenyl 4-diphosphate (HMBPP) into a mixture of isopentenyl diphosphate (IPP) and dimethylallyl diphosphate (DMAPP). Acts in the terminal step of the DOXP/MEP pathway for isoprenoid precursor biosynthesis.</text>
</comment>
<comment type="catalytic activity">
    <reaction evidence="1">
        <text>isopentenyl diphosphate + 2 oxidized [2Fe-2S]-[ferredoxin] + H2O = (2E)-4-hydroxy-3-methylbut-2-enyl diphosphate + 2 reduced [2Fe-2S]-[ferredoxin] + 2 H(+)</text>
        <dbReference type="Rhea" id="RHEA:24488"/>
        <dbReference type="Rhea" id="RHEA-COMP:10000"/>
        <dbReference type="Rhea" id="RHEA-COMP:10001"/>
        <dbReference type="ChEBI" id="CHEBI:15377"/>
        <dbReference type="ChEBI" id="CHEBI:15378"/>
        <dbReference type="ChEBI" id="CHEBI:33737"/>
        <dbReference type="ChEBI" id="CHEBI:33738"/>
        <dbReference type="ChEBI" id="CHEBI:128753"/>
        <dbReference type="ChEBI" id="CHEBI:128769"/>
        <dbReference type="EC" id="1.17.7.4"/>
    </reaction>
</comment>
<comment type="catalytic activity">
    <reaction evidence="1">
        <text>dimethylallyl diphosphate + 2 oxidized [2Fe-2S]-[ferredoxin] + H2O = (2E)-4-hydroxy-3-methylbut-2-enyl diphosphate + 2 reduced [2Fe-2S]-[ferredoxin] + 2 H(+)</text>
        <dbReference type="Rhea" id="RHEA:24825"/>
        <dbReference type="Rhea" id="RHEA-COMP:10000"/>
        <dbReference type="Rhea" id="RHEA-COMP:10001"/>
        <dbReference type="ChEBI" id="CHEBI:15377"/>
        <dbReference type="ChEBI" id="CHEBI:15378"/>
        <dbReference type="ChEBI" id="CHEBI:33737"/>
        <dbReference type="ChEBI" id="CHEBI:33738"/>
        <dbReference type="ChEBI" id="CHEBI:57623"/>
        <dbReference type="ChEBI" id="CHEBI:128753"/>
        <dbReference type="EC" id="1.17.7.4"/>
    </reaction>
</comment>
<comment type="cofactor">
    <cofactor evidence="1">
        <name>[4Fe-4S] cluster</name>
        <dbReference type="ChEBI" id="CHEBI:49883"/>
    </cofactor>
    <text evidence="1">Binds 1 [4Fe-4S] cluster per subunit.</text>
</comment>
<comment type="pathway">
    <text evidence="1">Isoprenoid biosynthesis; dimethylallyl diphosphate biosynthesis; dimethylallyl diphosphate from (2E)-4-hydroxy-3-methylbutenyl diphosphate: step 1/1.</text>
</comment>
<comment type="pathway">
    <text evidence="1">Isoprenoid biosynthesis; isopentenyl diphosphate biosynthesis via DXP pathway; isopentenyl diphosphate from 1-deoxy-D-xylulose 5-phosphate: step 6/6.</text>
</comment>
<comment type="similarity">
    <text evidence="1">Belongs to the IspH family.</text>
</comment>
<sequence>MIKVEIDEGSGFCFGVVTAIHKAEEELAKGETLYCLGDIVHNSREVERLKAMGLITINRDEFRQLRNAKVLLRAHGEPPETYQIAHKNNIEIIDATCPVVLRLQKRIKQEFRKEDFEEKQIVIYGKNGHAEVLGLVGQTGGQAIVIESAEEAKKLDFTKSIRLFSQTTKSLDEFQEIVEYIKLHISPDATFEYYDTICRQVANRMPNLREFAATHDLIFFVSGKKSSNGKMLFEECLKVNANSHLIDNEKEIDPTLLRNVKSIGVCGATSTPKWLMEKIHDHIQLLIKD</sequence>
<protein>
    <recommendedName>
        <fullName evidence="1">4-hydroxy-3-methylbut-2-enyl diphosphate reductase</fullName>
        <shortName evidence="1">HMBPP reductase</shortName>
        <ecNumber evidence="1">1.17.7.4</ecNumber>
    </recommendedName>
</protein>
<gene>
    <name evidence="1" type="primary">ispH</name>
    <name type="ordered locus">BT_2061</name>
</gene>
<feature type="chain" id="PRO_0000128777" description="4-hydroxy-3-methylbut-2-enyl diphosphate reductase">
    <location>
        <begin position="1"/>
        <end position="289"/>
    </location>
</feature>
<feature type="active site" description="Proton donor" evidence="1">
    <location>
        <position position="131"/>
    </location>
</feature>
<feature type="binding site" evidence="1">
    <location>
        <position position="13"/>
    </location>
    <ligand>
        <name>[4Fe-4S] cluster</name>
        <dbReference type="ChEBI" id="CHEBI:49883"/>
    </ligand>
</feature>
<feature type="binding site" evidence="1">
    <location>
        <position position="41"/>
    </location>
    <ligand>
        <name>(2E)-4-hydroxy-3-methylbut-2-enyl diphosphate</name>
        <dbReference type="ChEBI" id="CHEBI:128753"/>
    </ligand>
</feature>
<feature type="binding site" evidence="1">
    <location>
        <position position="41"/>
    </location>
    <ligand>
        <name>dimethylallyl diphosphate</name>
        <dbReference type="ChEBI" id="CHEBI:57623"/>
    </ligand>
</feature>
<feature type="binding site" evidence="1">
    <location>
        <position position="41"/>
    </location>
    <ligand>
        <name>isopentenyl diphosphate</name>
        <dbReference type="ChEBI" id="CHEBI:128769"/>
    </ligand>
</feature>
<feature type="binding site" evidence="1">
    <location>
        <position position="75"/>
    </location>
    <ligand>
        <name>(2E)-4-hydroxy-3-methylbut-2-enyl diphosphate</name>
        <dbReference type="ChEBI" id="CHEBI:128753"/>
    </ligand>
</feature>
<feature type="binding site" evidence="1">
    <location>
        <position position="75"/>
    </location>
    <ligand>
        <name>dimethylallyl diphosphate</name>
        <dbReference type="ChEBI" id="CHEBI:57623"/>
    </ligand>
</feature>
<feature type="binding site" evidence="1">
    <location>
        <position position="75"/>
    </location>
    <ligand>
        <name>isopentenyl diphosphate</name>
        <dbReference type="ChEBI" id="CHEBI:128769"/>
    </ligand>
</feature>
<feature type="binding site" evidence="1">
    <location>
        <position position="97"/>
    </location>
    <ligand>
        <name>[4Fe-4S] cluster</name>
        <dbReference type="ChEBI" id="CHEBI:49883"/>
    </ligand>
</feature>
<feature type="binding site" evidence="1">
    <location>
        <position position="129"/>
    </location>
    <ligand>
        <name>(2E)-4-hydroxy-3-methylbut-2-enyl diphosphate</name>
        <dbReference type="ChEBI" id="CHEBI:128753"/>
    </ligand>
</feature>
<feature type="binding site" evidence="1">
    <location>
        <position position="129"/>
    </location>
    <ligand>
        <name>dimethylallyl diphosphate</name>
        <dbReference type="ChEBI" id="CHEBI:57623"/>
    </ligand>
</feature>
<feature type="binding site" evidence="1">
    <location>
        <position position="129"/>
    </location>
    <ligand>
        <name>isopentenyl diphosphate</name>
        <dbReference type="ChEBI" id="CHEBI:128769"/>
    </ligand>
</feature>
<feature type="binding site" evidence="1">
    <location>
        <position position="167"/>
    </location>
    <ligand>
        <name>(2E)-4-hydroxy-3-methylbut-2-enyl diphosphate</name>
        <dbReference type="ChEBI" id="CHEBI:128753"/>
    </ligand>
</feature>
<feature type="binding site" evidence="1">
    <location>
        <position position="198"/>
    </location>
    <ligand>
        <name>[4Fe-4S] cluster</name>
        <dbReference type="ChEBI" id="CHEBI:49883"/>
    </ligand>
</feature>
<feature type="binding site" evidence="1">
    <location>
        <position position="226"/>
    </location>
    <ligand>
        <name>(2E)-4-hydroxy-3-methylbut-2-enyl diphosphate</name>
        <dbReference type="ChEBI" id="CHEBI:128753"/>
    </ligand>
</feature>
<feature type="binding site" evidence="1">
    <location>
        <position position="226"/>
    </location>
    <ligand>
        <name>dimethylallyl diphosphate</name>
        <dbReference type="ChEBI" id="CHEBI:57623"/>
    </ligand>
</feature>
<feature type="binding site" evidence="1">
    <location>
        <position position="226"/>
    </location>
    <ligand>
        <name>isopentenyl diphosphate</name>
        <dbReference type="ChEBI" id="CHEBI:128769"/>
    </ligand>
</feature>
<feature type="binding site" evidence="1">
    <location>
        <position position="227"/>
    </location>
    <ligand>
        <name>(2E)-4-hydroxy-3-methylbut-2-enyl diphosphate</name>
        <dbReference type="ChEBI" id="CHEBI:128753"/>
    </ligand>
</feature>
<feature type="binding site" evidence="1">
    <location>
        <position position="227"/>
    </location>
    <ligand>
        <name>dimethylallyl diphosphate</name>
        <dbReference type="ChEBI" id="CHEBI:57623"/>
    </ligand>
</feature>
<feature type="binding site" evidence="1">
    <location>
        <position position="227"/>
    </location>
    <ligand>
        <name>isopentenyl diphosphate</name>
        <dbReference type="ChEBI" id="CHEBI:128769"/>
    </ligand>
</feature>
<feature type="binding site" evidence="1">
    <location>
        <position position="228"/>
    </location>
    <ligand>
        <name>(2E)-4-hydroxy-3-methylbut-2-enyl diphosphate</name>
        <dbReference type="ChEBI" id="CHEBI:128753"/>
    </ligand>
</feature>
<feature type="binding site" evidence="1">
    <location>
        <position position="228"/>
    </location>
    <ligand>
        <name>dimethylallyl diphosphate</name>
        <dbReference type="ChEBI" id="CHEBI:57623"/>
    </ligand>
</feature>
<feature type="binding site" evidence="1">
    <location>
        <position position="228"/>
    </location>
    <ligand>
        <name>isopentenyl diphosphate</name>
        <dbReference type="ChEBI" id="CHEBI:128769"/>
    </ligand>
</feature>
<feature type="binding site" evidence="1">
    <location>
        <position position="270"/>
    </location>
    <ligand>
        <name>(2E)-4-hydroxy-3-methylbut-2-enyl diphosphate</name>
        <dbReference type="ChEBI" id="CHEBI:128753"/>
    </ligand>
</feature>
<feature type="binding site" evidence="1">
    <location>
        <position position="270"/>
    </location>
    <ligand>
        <name>dimethylallyl diphosphate</name>
        <dbReference type="ChEBI" id="CHEBI:57623"/>
    </ligand>
</feature>
<feature type="binding site" evidence="1">
    <location>
        <position position="270"/>
    </location>
    <ligand>
        <name>isopentenyl diphosphate</name>
        <dbReference type="ChEBI" id="CHEBI:128769"/>
    </ligand>
</feature>
<accession>Q8A625</accession>
<evidence type="ECO:0000255" key="1">
    <source>
        <dbReference type="HAMAP-Rule" id="MF_00191"/>
    </source>
</evidence>
<dbReference type="EC" id="1.17.7.4" evidence="1"/>
<dbReference type="EMBL" id="AE015928">
    <property type="protein sequence ID" value="AAO77168.1"/>
    <property type="molecule type" value="Genomic_DNA"/>
</dbReference>
<dbReference type="RefSeq" id="NP_810974.1">
    <property type="nucleotide sequence ID" value="NC_004663.1"/>
</dbReference>
<dbReference type="RefSeq" id="WP_011108114.1">
    <property type="nucleotide sequence ID" value="NC_004663.1"/>
</dbReference>
<dbReference type="SMR" id="Q8A625"/>
<dbReference type="FunCoup" id="Q8A625">
    <property type="interactions" value="421"/>
</dbReference>
<dbReference type="STRING" id="226186.BT_2061"/>
<dbReference type="PaxDb" id="226186-BT_2061"/>
<dbReference type="DNASU" id="1071717"/>
<dbReference type="EnsemblBacteria" id="AAO77168">
    <property type="protein sequence ID" value="AAO77168"/>
    <property type="gene ID" value="BT_2061"/>
</dbReference>
<dbReference type="GeneID" id="60928049"/>
<dbReference type="KEGG" id="bth:BT_2061"/>
<dbReference type="PATRIC" id="fig|226186.12.peg.2119"/>
<dbReference type="eggNOG" id="COG0761">
    <property type="taxonomic scope" value="Bacteria"/>
</dbReference>
<dbReference type="HOGENOM" id="CLU_027486_0_1_10"/>
<dbReference type="InParanoid" id="Q8A625"/>
<dbReference type="OrthoDB" id="9777362at2"/>
<dbReference type="UniPathway" id="UPA00056">
    <property type="reaction ID" value="UER00097"/>
</dbReference>
<dbReference type="UniPathway" id="UPA00059">
    <property type="reaction ID" value="UER00105"/>
</dbReference>
<dbReference type="Proteomes" id="UP000001414">
    <property type="component" value="Chromosome"/>
</dbReference>
<dbReference type="GO" id="GO:0005829">
    <property type="term" value="C:cytosol"/>
    <property type="evidence" value="ECO:0000318"/>
    <property type="project" value="GO_Central"/>
</dbReference>
<dbReference type="GO" id="GO:0051539">
    <property type="term" value="F:4 iron, 4 sulfur cluster binding"/>
    <property type="evidence" value="ECO:0007669"/>
    <property type="project" value="UniProtKB-UniRule"/>
</dbReference>
<dbReference type="GO" id="GO:0051745">
    <property type="term" value="F:4-hydroxy-3-methylbut-2-enyl diphosphate reductase activity"/>
    <property type="evidence" value="ECO:0000318"/>
    <property type="project" value="GO_Central"/>
</dbReference>
<dbReference type="GO" id="GO:0046872">
    <property type="term" value="F:metal ion binding"/>
    <property type="evidence" value="ECO:0007669"/>
    <property type="project" value="UniProtKB-KW"/>
</dbReference>
<dbReference type="GO" id="GO:0050992">
    <property type="term" value="P:dimethylallyl diphosphate biosynthetic process"/>
    <property type="evidence" value="ECO:0007669"/>
    <property type="project" value="UniProtKB-UniRule"/>
</dbReference>
<dbReference type="GO" id="GO:0019288">
    <property type="term" value="P:isopentenyl diphosphate biosynthetic process, methylerythritol 4-phosphate pathway"/>
    <property type="evidence" value="ECO:0000318"/>
    <property type="project" value="GO_Central"/>
</dbReference>
<dbReference type="GO" id="GO:0016114">
    <property type="term" value="P:terpenoid biosynthetic process"/>
    <property type="evidence" value="ECO:0007669"/>
    <property type="project" value="UniProtKB-UniRule"/>
</dbReference>
<dbReference type="CDD" id="cd13944">
    <property type="entry name" value="lytB_ispH"/>
    <property type="match status" value="1"/>
</dbReference>
<dbReference type="Gene3D" id="3.40.50.11270">
    <property type="match status" value="1"/>
</dbReference>
<dbReference type="Gene3D" id="3.40.1010.20">
    <property type="entry name" value="4-hydroxy-3-methylbut-2-enyl diphosphate reductase, catalytic domain"/>
    <property type="match status" value="2"/>
</dbReference>
<dbReference type="HAMAP" id="MF_00191">
    <property type="entry name" value="IspH"/>
    <property type="match status" value="1"/>
</dbReference>
<dbReference type="InterPro" id="IPR003451">
    <property type="entry name" value="LytB/IspH"/>
</dbReference>
<dbReference type="NCBIfam" id="TIGR00216">
    <property type="entry name" value="ispH_lytB"/>
    <property type="match status" value="1"/>
</dbReference>
<dbReference type="NCBIfam" id="NF002187">
    <property type="entry name" value="PRK01045.1-1"/>
    <property type="match status" value="1"/>
</dbReference>
<dbReference type="PANTHER" id="PTHR30426">
    <property type="entry name" value="4-HYDROXY-3-METHYLBUT-2-ENYL DIPHOSPHATE REDUCTASE"/>
    <property type="match status" value="1"/>
</dbReference>
<dbReference type="PANTHER" id="PTHR30426:SF0">
    <property type="entry name" value="4-HYDROXY-3-METHYLBUT-2-ENYL DIPHOSPHATE REDUCTASE"/>
    <property type="match status" value="1"/>
</dbReference>
<dbReference type="Pfam" id="PF02401">
    <property type="entry name" value="LYTB"/>
    <property type="match status" value="1"/>
</dbReference>
<reference key="1">
    <citation type="journal article" date="2003" name="Science">
        <title>A genomic view of the human-Bacteroides thetaiotaomicron symbiosis.</title>
        <authorList>
            <person name="Xu J."/>
            <person name="Bjursell M.K."/>
            <person name="Himrod J."/>
            <person name="Deng S."/>
            <person name="Carmichael L.K."/>
            <person name="Chiang H.C."/>
            <person name="Hooper L.V."/>
            <person name="Gordon J.I."/>
        </authorList>
    </citation>
    <scope>NUCLEOTIDE SEQUENCE [LARGE SCALE GENOMIC DNA]</scope>
    <source>
        <strain>ATCC 29148 / DSM 2079 / JCM 5827 / CCUG 10774 / NCTC 10582 / VPI-5482 / E50</strain>
    </source>
</reference>
<proteinExistence type="inferred from homology"/>
<name>ISPH_BACTN</name>